<organism>
    <name type="scientific">Clostridium botulinum (strain Loch Maree / Type A3)</name>
    <dbReference type="NCBI Taxonomy" id="498214"/>
    <lineage>
        <taxon>Bacteria</taxon>
        <taxon>Bacillati</taxon>
        <taxon>Bacillota</taxon>
        <taxon>Clostridia</taxon>
        <taxon>Eubacteriales</taxon>
        <taxon>Clostridiaceae</taxon>
        <taxon>Clostridium</taxon>
    </lineage>
</organism>
<sequence length="229" mass="24614">MGKKYTESVKLVDKNALYTVQEAIELVTKTSKAKFDETVELAVRLGVDPRHADQQVRGAVVLPHGTGKTVRVLVFAKGDKVNEAQEAGADFVGAEELVEKIQKENWFDFDVVVATPDMMGVVGRLGRVLGPKGLMPNPKSGTVTFDVAKAIADIKAGKVEYRVDKTAIIHVPIGKSSFGEEKLSDNFHVLMEAVVKAKPAAAKGQYIKSVAISSTMGPGIKINPGKVLE</sequence>
<comment type="function">
    <text evidence="1">Binds directly to 23S rRNA. The L1 stalk is quite mobile in the ribosome, and is involved in E site tRNA release.</text>
</comment>
<comment type="function">
    <text evidence="1">Protein L1 is also a translational repressor protein, it controls the translation of the L11 operon by binding to its mRNA.</text>
</comment>
<comment type="subunit">
    <text evidence="1">Part of the 50S ribosomal subunit.</text>
</comment>
<comment type="similarity">
    <text evidence="1">Belongs to the universal ribosomal protein uL1 family.</text>
</comment>
<keyword id="KW-0678">Repressor</keyword>
<keyword id="KW-0687">Ribonucleoprotein</keyword>
<keyword id="KW-0689">Ribosomal protein</keyword>
<keyword id="KW-0694">RNA-binding</keyword>
<keyword id="KW-0699">rRNA-binding</keyword>
<keyword id="KW-0810">Translation regulation</keyword>
<keyword id="KW-0820">tRNA-binding</keyword>
<reference key="1">
    <citation type="journal article" date="2007" name="PLoS ONE">
        <title>Analysis of the neurotoxin complex genes in Clostridium botulinum A1-A4 and B1 strains: BoNT/A3, /Ba4 and /B1 clusters are located within plasmids.</title>
        <authorList>
            <person name="Smith T.J."/>
            <person name="Hill K.K."/>
            <person name="Foley B.T."/>
            <person name="Detter J.C."/>
            <person name="Munk A.C."/>
            <person name="Bruce D.C."/>
            <person name="Doggett N.A."/>
            <person name="Smith L.A."/>
            <person name="Marks J.D."/>
            <person name="Xie G."/>
            <person name="Brettin T.S."/>
        </authorList>
    </citation>
    <scope>NUCLEOTIDE SEQUENCE [LARGE SCALE GENOMIC DNA]</scope>
    <source>
        <strain>Loch Maree / Type A3</strain>
    </source>
</reference>
<dbReference type="EMBL" id="CP000962">
    <property type="protein sequence ID" value="ACA54270.1"/>
    <property type="molecule type" value="Genomic_DNA"/>
</dbReference>
<dbReference type="RefSeq" id="WP_012342397.1">
    <property type="nucleotide sequence ID" value="NC_010520.1"/>
</dbReference>
<dbReference type="SMR" id="B1KSN6"/>
<dbReference type="KEGG" id="cbl:CLK_2935"/>
<dbReference type="HOGENOM" id="CLU_062853_0_0_9"/>
<dbReference type="GO" id="GO:0015934">
    <property type="term" value="C:large ribosomal subunit"/>
    <property type="evidence" value="ECO:0007669"/>
    <property type="project" value="InterPro"/>
</dbReference>
<dbReference type="GO" id="GO:0019843">
    <property type="term" value="F:rRNA binding"/>
    <property type="evidence" value="ECO:0007669"/>
    <property type="project" value="UniProtKB-UniRule"/>
</dbReference>
<dbReference type="GO" id="GO:0003735">
    <property type="term" value="F:structural constituent of ribosome"/>
    <property type="evidence" value="ECO:0007669"/>
    <property type="project" value="InterPro"/>
</dbReference>
<dbReference type="GO" id="GO:0000049">
    <property type="term" value="F:tRNA binding"/>
    <property type="evidence" value="ECO:0007669"/>
    <property type="project" value="UniProtKB-KW"/>
</dbReference>
<dbReference type="GO" id="GO:0006417">
    <property type="term" value="P:regulation of translation"/>
    <property type="evidence" value="ECO:0007669"/>
    <property type="project" value="UniProtKB-KW"/>
</dbReference>
<dbReference type="GO" id="GO:0006412">
    <property type="term" value="P:translation"/>
    <property type="evidence" value="ECO:0007669"/>
    <property type="project" value="UniProtKB-UniRule"/>
</dbReference>
<dbReference type="CDD" id="cd00403">
    <property type="entry name" value="Ribosomal_L1"/>
    <property type="match status" value="1"/>
</dbReference>
<dbReference type="FunFam" id="3.40.50.790:FF:000001">
    <property type="entry name" value="50S ribosomal protein L1"/>
    <property type="match status" value="1"/>
</dbReference>
<dbReference type="Gene3D" id="3.30.190.20">
    <property type="match status" value="1"/>
</dbReference>
<dbReference type="Gene3D" id="3.40.50.790">
    <property type="match status" value="1"/>
</dbReference>
<dbReference type="HAMAP" id="MF_01318_B">
    <property type="entry name" value="Ribosomal_uL1_B"/>
    <property type="match status" value="1"/>
</dbReference>
<dbReference type="InterPro" id="IPR005878">
    <property type="entry name" value="Ribosom_uL1_bac-type"/>
</dbReference>
<dbReference type="InterPro" id="IPR002143">
    <property type="entry name" value="Ribosomal_uL1"/>
</dbReference>
<dbReference type="InterPro" id="IPR023674">
    <property type="entry name" value="Ribosomal_uL1-like"/>
</dbReference>
<dbReference type="InterPro" id="IPR028364">
    <property type="entry name" value="Ribosomal_uL1/biogenesis"/>
</dbReference>
<dbReference type="InterPro" id="IPR016095">
    <property type="entry name" value="Ribosomal_uL1_3-a/b-sand"/>
</dbReference>
<dbReference type="InterPro" id="IPR023673">
    <property type="entry name" value="Ribosomal_uL1_CS"/>
</dbReference>
<dbReference type="NCBIfam" id="TIGR01169">
    <property type="entry name" value="rplA_bact"/>
    <property type="match status" value="1"/>
</dbReference>
<dbReference type="PANTHER" id="PTHR36427">
    <property type="entry name" value="54S RIBOSOMAL PROTEIN L1, MITOCHONDRIAL"/>
    <property type="match status" value="1"/>
</dbReference>
<dbReference type="PANTHER" id="PTHR36427:SF3">
    <property type="entry name" value="LARGE RIBOSOMAL SUBUNIT PROTEIN UL1M"/>
    <property type="match status" value="1"/>
</dbReference>
<dbReference type="Pfam" id="PF00687">
    <property type="entry name" value="Ribosomal_L1"/>
    <property type="match status" value="1"/>
</dbReference>
<dbReference type="PIRSF" id="PIRSF002155">
    <property type="entry name" value="Ribosomal_L1"/>
    <property type="match status" value="1"/>
</dbReference>
<dbReference type="SUPFAM" id="SSF56808">
    <property type="entry name" value="Ribosomal protein L1"/>
    <property type="match status" value="1"/>
</dbReference>
<dbReference type="PROSITE" id="PS01199">
    <property type="entry name" value="RIBOSOMAL_L1"/>
    <property type="match status" value="1"/>
</dbReference>
<protein>
    <recommendedName>
        <fullName evidence="1">Large ribosomal subunit protein uL1</fullName>
    </recommendedName>
    <alternativeName>
        <fullName evidence="2">50S ribosomal protein L1</fullName>
    </alternativeName>
</protein>
<name>RL1_CLOBM</name>
<proteinExistence type="inferred from homology"/>
<gene>
    <name evidence="1" type="primary">rplA</name>
    <name type="ordered locus">CLK_2935</name>
</gene>
<accession>B1KSN6</accession>
<feature type="chain" id="PRO_1000141382" description="Large ribosomal subunit protein uL1">
    <location>
        <begin position="1"/>
        <end position="229"/>
    </location>
</feature>
<evidence type="ECO:0000255" key="1">
    <source>
        <dbReference type="HAMAP-Rule" id="MF_01318"/>
    </source>
</evidence>
<evidence type="ECO:0000305" key="2"/>